<comment type="function">
    <text>Stabilizes the aggregates of proteoglycan monomers with hyaluronic acid in the extracellular cartilage matrix.</text>
</comment>
<comment type="subcellular location">
    <subcellularLocation>
        <location>Secreted</location>
        <location>Extracellular space</location>
        <location>Extracellular matrix</location>
    </subcellularLocation>
</comment>
<comment type="similarity">
    <text evidence="4">Belongs to the HAPLN family.</text>
</comment>
<evidence type="ECO:0000250" key="1"/>
<evidence type="ECO:0000255" key="2"/>
<evidence type="ECO:0000255" key="3">
    <source>
        <dbReference type="PROSITE-ProRule" id="PRU00323"/>
    </source>
</evidence>
<evidence type="ECO:0000305" key="4"/>
<organism>
    <name type="scientific">Sus scrofa</name>
    <name type="common">Pig</name>
    <dbReference type="NCBI Taxonomy" id="9823"/>
    <lineage>
        <taxon>Eukaryota</taxon>
        <taxon>Metazoa</taxon>
        <taxon>Chordata</taxon>
        <taxon>Craniata</taxon>
        <taxon>Vertebrata</taxon>
        <taxon>Euteleostomi</taxon>
        <taxon>Mammalia</taxon>
        <taxon>Eutheria</taxon>
        <taxon>Laurasiatheria</taxon>
        <taxon>Artiodactyla</taxon>
        <taxon>Suina</taxon>
        <taxon>Suidae</taxon>
        <taxon>Sus</taxon>
    </lineage>
</organism>
<gene>
    <name type="primary">HAPLN1</name>
    <name type="synonym">CRTL1</name>
</gene>
<accession>P10859</accession>
<protein>
    <recommendedName>
        <fullName>Hyaluronan and proteoglycan link protein 1</fullName>
    </recommendedName>
    <alternativeName>
        <fullName>Cartilage-linking protein 1</fullName>
        <shortName>Cartilage-link protein</shortName>
    </alternativeName>
    <alternativeName>
        <fullName>Proteoglycan link protein</fullName>
    </alternativeName>
</protein>
<name>HPLN1_PIG</name>
<sequence length="354" mass="40261">MKSLLLLVLISVCWADHLSNNYTLDHDRVIHIQAENGPRLLVEAEQAKVFSHRGGNVTLPCKFFRDPTAFGSGTHKIRIKWTKLTSDYLKEVDVFVSMGYHKKTYGGYHGRVFLKGGSDNDASLVITDLTLEDYGRYKCEVIEGLEDDTAVVALDLEGVVFPYFPRLGRYNLNFHEAQQACLDQDAVIASFDQLYDAWRGGLDWCNAGWLSDGSVQYPITKPREPCGGQNTVPGVRNYGFWDKDKSRYDVFCFTSNFNGRFYYLIHPTKLTYDEAVQACLNDGAQIAKVGQIFAAWKLLGYDRCDAGWLADGSVRYPISRPRRRCRPNEAAVRFVGFPDKKHKLYGVYCFRAYN</sequence>
<proteinExistence type="evidence at transcript level"/>
<keyword id="KW-1015">Disulfide bond</keyword>
<keyword id="KW-0272">Extracellular matrix</keyword>
<keyword id="KW-0325">Glycoprotein</keyword>
<keyword id="KW-0373">Hyaluronic acid</keyword>
<keyword id="KW-0393">Immunoglobulin domain</keyword>
<keyword id="KW-1185">Reference proteome</keyword>
<keyword id="KW-0677">Repeat</keyword>
<keyword id="KW-0964">Secreted</keyword>
<reference key="1">
    <citation type="journal article" date="1989" name="J. Mol. Biol.">
        <title>Immunoglobulin fold and tandem repeat structures in proteoglycan N-terminal domains and link protein.</title>
        <authorList>
            <person name="Perkins S.J."/>
            <person name="Nealis A.S."/>
            <person name="Dudhia J."/>
            <person name="Hardingham T.E."/>
        </authorList>
    </citation>
    <scope>NUCLEOTIDE SEQUENCE [MRNA]</scope>
    <source>
        <tissue>Laryngeal cartilage chondrocyte</tissue>
    </source>
</reference>
<feature type="propeptide" id="PRO_0000013181">
    <location>
        <begin position="1"/>
        <end position="9"/>
    </location>
</feature>
<feature type="chain" id="PRO_0000013182" description="Hyaluronan and proteoglycan link protein 1">
    <location>
        <begin position="10"/>
        <end position="354"/>
    </location>
</feature>
<feature type="domain" description="Ig-like V-type">
    <location>
        <begin position="38"/>
        <end position="152"/>
    </location>
</feature>
<feature type="domain" description="Link 1" evidence="3">
    <location>
        <begin position="159"/>
        <end position="254"/>
    </location>
</feature>
<feature type="domain" description="Link 2" evidence="3">
    <location>
        <begin position="259"/>
        <end position="351"/>
    </location>
</feature>
<feature type="glycosylation site" description="N-linked (GlcNAc...) asparagine" evidence="2">
    <location>
        <position position="21"/>
    </location>
</feature>
<feature type="glycosylation site" description="N-linked (GlcNAc...) asparagine" evidence="2">
    <location>
        <position position="56"/>
    </location>
</feature>
<feature type="disulfide bond" evidence="1">
    <location>
        <begin position="61"/>
        <end position="139"/>
    </location>
</feature>
<feature type="disulfide bond" evidence="1">
    <location>
        <begin position="181"/>
        <end position="252"/>
    </location>
</feature>
<feature type="disulfide bond" evidence="1">
    <location>
        <begin position="205"/>
        <end position="226"/>
    </location>
</feature>
<feature type="disulfide bond" evidence="1">
    <location>
        <begin position="279"/>
        <end position="349"/>
    </location>
</feature>
<feature type="disulfide bond" evidence="1">
    <location>
        <begin position="304"/>
        <end position="325"/>
    </location>
</feature>
<dbReference type="EMBL" id="Y00165">
    <property type="protein sequence ID" value="CAA68358.1"/>
    <property type="molecule type" value="mRNA"/>
</dbReference>
<dbReference type="PIR" id="S04243">
    <property type="entry name" value="S04243"/>
</dbReference>
<dbReference type="RefSeq" id="NP_001004028.1">
    <property type="nucleotide sequence ID" value="NM_001004028.1"/>
</dbReference>
<dbReference type="SMR" id="P10859"/>
<dbReference type="FunCoup" id="P10859">
    <property type="interactions" value="241"/>
</dbReference>
<dbReference type="STRING" id="9823.ENSSSCP00000015032"/>
<dbReference type="GlyCosmos" id="P10859">
    <property type="glycosylation" value="2 sites, No reported glycans"/>
</dbReference>
<dbReference type="GlyGen" id="P10859">
    <property type="glycosylation" value="2 sites"/>
</dbReference>
<dbReference type="PaxDb" id="9823-ENSSSCP00000015032"/>
<dbReference type="PeptideAtlas" id="P10859"/>
<dbReference type="GeneID" id="445513"/>
<dbReference type="KEGG" id="ssc:445513"/>
<dbReference type="CTD" id="1404"/>
<dbReference type="eggNOG" id="ENOG502QRAR">
    <property type="taxonomic scope" value="Eukaryota"/>
</dbReference>
<dbReference type="InParanoid" id="P10859"/>
<dbReference type="OrthoDB" id="5359219at2759"/>
<dbReference type="Proteomes" id="UP000008227">
    <property type="component" value="Unplaced"/>
</dbReference>
<dbReference type="Proteomes" id="UP000314985">
    <property type="component" value="Unplaced"/>
</dbReference>
<dbReference type="Proteomes" id="UP000694570">
    <property type="component" value="Unplaced"/>
</dbReference>
<dbReference type="Proteomes" id="UP000694571">
    <property type="component" value="Unplaced"/>
</dbReference>
<dbReference type="Proteomes" id="UP000694720">
    <property type="component" value="Unplaced"/>
</dbReference>
<dbReference type="Proteomes" id="UP000694722">
    <property type="component" value="Unplaced"/>
</dbReference>
<dbReference type="Proteomes" id="UP000694723">
    <property type="component" value="Unplaced"/>
</dbReference>
<dbReference type="Proteomes" id="UP000694724">
    <property type="component" value="Unplaced"/>
</dbReference>
<dbReference type="Proteomes" id="UP000694725">
    <property type="component" value="Unplaced"/>
</dbReference>
<dbReference type="Proteomes" id="UP000694726">
    <property type="component" value="Unplaced"/>
</dbReference>
<dbReference type="Proteomes" id="UP000694727">
    <property type="component" value="Unplaced"/>
</dbReference>
<dbReference type="Proteomes" id="UP000694728">
    <property type="component" value="Unplaced"/>
</dbReference>
<dbReference type="GO" id="GO:0005615">
    <property type="term" value="C:extracellular space"/>
    <property type="evidence" value="ECO:0000318"/>
    <property type="project" value="GO_Central"/>
</dbReference>
<dbReference type="GO" id="GO:0072534">
    <property type="term" value="C:perineuronal net"/>
    <property type="evidence" value="ECO:0000318"/>
    <property type="project" value="GO_Central"/>
</dbReference>
<dbReference type="GO" id="GO:0045202">
    <property type="term" value="C:synapse"/>
    <property type="evidence" value="ECO:0000318"/>
    <property type="project" value="GO_Central"/>
</dbReference>
<dbReference type="GO" id="GO:0005540">
    <property type="term" value="F:hyaluronic acid binding"/>
    <property type="evidence" value="ECO:0007669"/>
    <property type="project" value="UniProtKB-KW"/>
</dbReference>
<dbReference type="GO" id="GO:0007155">
    <property type="term" value="P:cell adhesion"/>
    <property type="evidence" value="ECO:0007669"/>
    <property type="project" value="InterPro"/>
</dbReference>
<dbReference type="GO" id="GO:0007417">
    <property type="term" value="P:central nervous system development"/>
    <property type="evidence" value="ECO:0000318"/>
    <property type="project" value="GO_Central"/>
</dbReference>
<dbReference type="GO" id="GO:0001501">
    <property type="term" value="P:skeletal system development"/>
    <property type="evidence" value="ECO:0000318"/>
    <property type="project" value="GO_Central"/>
</dbReference>
<dbReference type="CDD" id="cd05877">
    <property type="entry name" value="Ig_LP_like"/>
    <property type="match status" value="1"/>
</dbReference>
<dbReference type="CDD" id="cd03518">
    <property type="entry name" value="Link_domain_HAPLN_module_1"/>
    <property type="match status" value="1"/>
</dbReference>
<dbReference type="CDD" id="cd03519">
    <property type="entry name" value="Link_domain_HAPLN_module_2"/>
    <property type="match status" value="1"/>
</dbReference>
<dbReference type="FunFam" id="2.60.40.10:FF:000631">
    <property type="entry name" value="Hyaluronan and proteoglycan link protein 1"/>
    <property type="match status" value="1"/>
</dbReference>
<dbReference type="FunFam" id="3.10.100.10:FF:000001">
    <property type="entry name" value="Hyaluronan proteoglycan link protein 1"/>
    <property type="match status" value="1"/>
</dbReference>
<dbReference type="FunFam" id="3.10.100.10:FF:000002">
    <property type="entry name" value="Hyaluronan proteoglycan link protein 1"/>
    <property type="match status" value="1"/>
</dbReference>
<dbReference type="Gene3D" id="2.60.40.10">
    <property type="entry name" value="Immunoglobulins"/>
    <property type="match status" value="1"/>
</dbReference>
<dbReference type="Gene3D" id="3.10.100.10">
    <property type="entry name" value="Mannose-Binding Protein A, subunit A"/>
    <property type="match status" value="2"/>
</dbReference>
<dbReference type="InterPro" id="IPR016186">
    <property type="entry name" value="C-type_lectin-like/link_sf"/>
</dbReference>
<dbReference type="InterPro" id="IPR016187">
    <property type="entry name" value="CTDL_fold"/>
</dbReference>
<dbReference type="InterPro" id="IPR050691">
    <property type="entry name" value="Hyaluronan_bind_Proteoglycan"/>
</dbReference>
<dbReference type="InterPro" id="IPR007110">
    <property type="entry name" value="Ig-like_dom"/>
</dbReference>
<dbReference type="InterPro" id="IPR036179">
    <property type="entry name" value="Ig-like_dom_sf"/>
</dbReference>
<dbReference type="InterPro" id="IPR013783">
    <property type="entry name" value="Ig-like_fold"/>
</dbReference>
<dbReference type="InterPro" id="IPR003599">
    <property type="entry name" value="Ig_sub"/>
</dbReference>
<dbReference type="InterPro" id="IPR013106">
    <property type="entry name" value="Ig_V-set"/>
</dbReference>
<dbReference type="InterPro" id="IPR000538">
    <property type="entry name" value="Link_dom"/>
</dbReference>
<dbReference type="PANTHER" id="PTHR22804">
    <property type="entry name" value="AGGRECAN/VERSICAN PROTEOGLYCAN"/>
    <property type="match status" value="1"/>
</dbReference>
<dbReference type="PANTHER" id="PTHR22804:SF10">
    <property type="entry name" value="HYALURONAN AND PROTEOGLYCAN LINK PROTEIN 1"/>
    <property type="match status" value="1"/>
</dbReference>
<dbReference type="Pfam" id="PF07686">
    <property type="entry name" value="V-set"/>
    <property type="match status" value="1"/>
</dbReference>
<dbReference type="Pfam" id="PF00193">
    <property type="entry name" value="Xlink"/>
    <property type="match status" value="2"/>
</dbReference>
<dbReference type="PRINTS" id="PR01265">
    <property type="entry name" value="LINKMODULE"/>
</dbReference>
<dbReference type="SMART" id="SM00409">
    <property type="entry name" value="IG"/>
    <property type="match status" value="1"/>
</dbReference>
<dbReference type="SMART" id="SM00406">
    <property type="entry name" value="IGv"/>
    <property type="match status" value="1"/>
</dbReference>
<dbReference type="SMART" id="SM00445">
    <property type="entry name" value="LINK"/>
    <property type="match status" value="2"/>
</dbReference>
<dbReference type="SUPFAM" id="SSF56436">
    <property type="entry name" value="C-type lectin-like"/>
    <property type="match status" value="2"/>
</dbReference>
<dbReference type="SUPFAM" id="SSF48726">
    <property type="entry name" value="Immunoglobulin"/>
    <property type="match status" value="1"/>
</dbReference>
<dbReference type="PROSITE" id="PS50835">
    <property type="entry name" value="IG_LIKE"/>
    <property type="match status" value="1"/>
</dbReference>
<dbReference type="PROSITE" id="PS01241">
    <property type="entry name" value="LINK_1"/>
    <property type="match status" value="2"/>
</dbReference>
<dbReference type="PROSITE" id="PS50963">
    <property type="entry name" value="LINK_2"/>
    <property type="match status" value="2"/>
</dbReference>